<feature type="signal peptide" evidence="1">
    <location>
        <begin position="1"/>
        <end position="18"/>
    </location>
</feature>
<feature type="chain" id="PRO_5014266704" description="U12-hexatoxin-Hi1a" evidence="4">
    <location>
        <begin position="19"/>
        <end position="110"/>
    </location>
</feature>
<feature type="disulfide bond" evidence="4">
    <location>
        <begin position="72"/>
        <end position="86"/>
    </location>
</feature>
<feature type="disulfide bond" evidence="4">
    <location>
        <begin position="79"/>
        <end position="91"/>
    </location>
</feature>
<feature type="disulfide bond" evidence="4">
    <location>
        <begin position="85"/>
        <end position="104"/>
    </location>
</feature>
<protein>
    <recommendedName>
        <fullName evidence="2">U12-hexatoxin-Hi1a</fullName>
        <shortName evidence="2">U12-HXTX-Hi1a</shortName>
    </recommendedName>
    <alternativeName>
        <fullName evidence="2">SF17 peptide</fullName>
    </alternativeName>
</protein>
<name>TC1A_HADIN</name>
<keyword id="KW-1015">Disulfide bond</keyword>
<keyword id="KW-0872">Ion channel impairing toxin</keyword>
<keyword id="KW-0964">Secreted</keyword>
<keyword id="KW-0732">Signal</keyword>
<keyword id="KW-0800">Toxin</keyword>
<sequence>MRVALVFLVLSILAATHGDTNLDMERKEADESSLSEMKEMLLLQELQAVEAALFGKMNVENDENRDFREKRCGGYGMSCKSVQDCCGELDCRKDPSTWIDHPYCLNPKKG</sequence>
<accession>A0A1D0C028</accession>
<evidence type="ECO:0000255" key="1"/>
<evidence type="ECO:0000303" key="2">
    <source>
    </source>
</evidence>
<evidence type="ECO:0000305" key="3"/>
<evidence type="ECO:0000305" key="4">
    <source>
    </source>
</evidence>
<evidence type="ECO:0000312" key="5">
    <source>
        <dbReference type="EMBL" id="CDZ18891.1"/>
    </source>
</evidence>
<proteinExistence type="inferred from homology"/>
<dbReference type="EMBL" id="HACE01000016">
    <property type="protein sequence ID" value="CDZ18800.1"/>
    <property type="molecule type" value="mRNA"/>
</dbReference>
<dbReference type="EMBL" id="HACE01000054">
    <property type="protein sequence ID" value="CDZ18838.1"/>
    <property type="molecule type" value="mRNA"/>
</dbReference>
<dbReference type="EMBL" id="HACE01000107">
    <property type="protein sequence ID" value="CDZ18891.1"/>
    <property type="molecule type" value="mRNA"/>
</dbReference>
<dbReference type="EMBL" id="HACE01000115">
    <property type="protein sequence ID" value="CDZ18899.1"/>
    <property type="molecule type" value="mRNA"/>
</dbReference>
<dbReference type="EMBL" id="HACE01000118">
    <property type="protein sequence ID" value="CDZ18902.1"/>
    <property type="molecule type" value="mRNA"/>
</dbReference>
<dbReference type="SMR" id="A0A1D0C028"/>
<dbReference type="GO" id="GO:0005576">
    <property type="term" value="C:extracellular region"/>
    <property type="evidence" value="ECO:0007669"/>
    <property type="project" value="UniProtKB-SubCell"/>
</dbReference>
<dbReference type="GO" id="GO:0099106">
    <property type="term" value="F:ion channel regulator activity"/>
    <property type="evidence" value="ECO:0007669"/>
    <property type="project" value="UniProtKB-KW"/>
</dbReference>
<dbReference type="GO" id="GO:0090729">
    <property type="term" value="F:toxin activity"/>
    <property type="evidence" value="ECO:0007669"/>
    <property type="project" value="UniProtKB-KW"/>
</dbReference>
<reference key="1">
    <citation type="journal article" date="2020" name="Proc. Natl. Acad. Sci. U.S.A.">
        <title>Structural venomics reveals evolution of a complex venom by duplication and diversification of an ancient peptide-encoding gene.</title>
        <authorList>
            <person name="Pineda S.S."/>
            <person name="Chin Y.K."/>
            <person name="Undheim E.A.B."/>
            <person name="Senff S."/>
            <person name="Mobli M."/>
            <person name="Dauly C."/>
            <person name="Escoubas P."/>
            <person name="Nicholson G.M."/>
            <person name="Kaas Q."/>
            <person name="Guo S."/>
            <person name="Herzig V."/>
            <person name="Mattick J.S."/>
            <person name="King G.F."/>
        </authorList>
    </citation>
    <scope>NUCLEOTIDE SEQUENCE [MRNA]</scope>
    <source>
        <tissue>Venom gland</tissue>
    </source>
</reference>
<reference evidence="5" key="2">
    <citation type="thesis" date="2012" institute="The University of Queensland" country="Australia">
        <title>Probing the chemical diversity of venom from the Australian Funnel-web spider Hadronyche infensa.</title>
        <authorList>
            <person name="Pineda S.S."/>
        </authorList>
    </citation>
    <scope>NUCLEOTIDE SEQUENCE [MRNA]</scope>
    <source>
        <tissue>Venom gland</tissue>
    </source>
</reference>
<reference evidence="5" key="3">
    <citation type="submission" date="2014-07" db="EMBL/GenBank/DDBJ databases">
        <authorList>
            <person name="Zhang J.E."/>
            <person name="Yang H."/>
            <person name="Guo J."/>
            <person name="Deng Z."/>
            <person name="Luo H."/>
            <person name="Luo M."/>
            <person name="Zhao B."/>
        </authorList>
    </citation>
    <scope>NUCLEOTIDE SEQUENCE [MRNA]</scope>
    <source>
        <tissue>Venom gland</tissue>
    </source>
</reference>
<organism>
    <name type="scientific">Hadronyche infensa</name>
    <name type="common">Fraser island funnel-web spider</name>
    <name type="synonym">Atrax infensus</name>
    <dbReference type="NCBI Taxonomy" id="153481"/>
    <lineage>
        <taxon>Eukaryota</taxon>
        <taxon>Metazoa</taxon>
        <taxon>Ecdysozoa</taxon>
        <taxon>Arthropoda</taxon>
        <taxon>Chelicerata</taxon>
        <taxon>Arachnida</taxon>
        <taxon>Araneae</taxon>
        <taxon>Mygalomorphae</taxon>
        <taxon>Hexathelidae</taxon>
        <taxon>Hadronyche</taxon>
    </lineage>
</organism>
<comment type="function">
    <text evidence="3">Probable ion channel inhibitor.</text>
</comment>
<comment type="subcellular location">
    <subcellularLocation>
        <location evidence="4">Secreted</location>
    </subcellularLocation>
</comment>
<comment type="tissue specificity">
    <text evidence="4">Expressed by the venom gland.</text>
</comment>
<comment type="domain">
    <text evidence="3">The presence of a 'disulfide through disulfide knot' structurally defines this protein as a knottin.</text>
</comment>